<gene>
    <name type="primary">Est-5A</name>
    <name type="synonym">Est5A</name>
</gene>
<accession>O16168</accession>
<proteinExistence type="inferred from homology"/>
<evidence type="ECO:0000250" key="1"/>
<evidence type="ECO:0000255" key="2"/>
<evidence type="ECO:0000255" key="3">
    <source>
        <dbReference type="PROSITE-ProRule" id="PRU10039"/>
    </source>
</evidence>
<evidence type="ECO:0000305" key="4"/>
<organism>
    <name type="scientific">Drosophila miranda</name>
    <name type="common">Fruit fly</name>
    <dbReference type="NCBI Taxonomy" id="7229"/>
    <lineage>
        <taxon>Eukaryota</taxon>
        <taxon>Metazoa</taxon>
        <taxon>Ecdysozoa</taxon>
        <taxon>Arthropoda</taxon>
        <taxon>Hexapoda</taxon>
        <taxon>Insecta</taxon>
        <taxon>Pterygota</taxon>
        <taxon>Neoptera</taxon>
        <taxon>Endopterygota</taxon>
        <taxon>Diptera</taxon>
        <taxon>Brachycera</taxon>
        <taxon>Muscomorpha</taxon>
        <taxon>Ephydroidea</taxon>
        <taxon>Drosophilidae</taxon>
        <taxon>Drosophila</taxon>
        <taxon>Sophophora</taxon>
    </lineage>
</organism>
<keyword id="KW-1015">Disulfide bond</keyword>
<keyword id="KW-0325">Glycoprotein</keyword>
<keyword id="KW-0378">Hydrolase</keyword>
<keyword id="KW-0964">Secreted</keyword>
<keyword id="KW-0719">Serine esterase</keyword>
<keyword id="KW-0732">Signal</keyword>
<comment type="catalytic activity">
    <reaction evidence="3">
        <text>a carboxylic ester + H2O = an alcohol + a carboxylate + H(+)</text>
        <dbReference type="Rhea" id="RHEA:21164"/>
        <dbReference type="ChEBI" id="CHEBI:15377"/>
        <dbReference type="ChEBI" id="CHEBI:15378"/>
        <dbReference type="ChEBI" id="CHEBI:29067"/>
        <dbReference type="ChEBI" id="CHEBI:30879"/>
        <dbReference type="ChEBI" id="CHEBI:33308"/>
        <dbReference type="EC" id="3.1.1.1"/>
    </reaction>
</comment>
<comment type="subcellular location">
    <subcellularLocation>
        <location>Secreted</location>
    </subcellularLocation>
</comment>
<comment type="similarity">
    <text evidence="4">Belongs to the type-B carboxylesterase/lipase family.</text>
</comment>
<protein>
    <recommendedName>
        <fullName>Esterase-5A</fullName>
        <shortName>Est-5A</shortName>
        <ecNumber>3.1.1.1</ecNumber>
    </recommendedName>
    <alternativeName>
        <fullName>Carboxylic-ester hydrolase 5A</fullName>
        <shortName>Carboxylesterase-5A</shortName>
    </alternativeName>
</protein>
<name>EST5A_DROMI</name>
<sequence>MHLVRWLICLIQLWIQLGAAGSVTLLDPLLIEIPNGKLRGRDNGHYYSYEAIPYAEPPTGELRFEVPKPYKQQWTNTFDATQPPVLCMQWNQFINGTNKLLGVEDCLTVSVYRPKNSSRNNFPVVANLHGGAFMFGGPSQYGHENIMREGSVILVTIGYRLGPLGFVSTGDADLSGNFGLKDQRLALLWIKQNIASFGGEPENILVVGHSAGGASVHLQMLREDFSKVAKAAISFSGNALDPWVIQQGLRGRTFELGRIVGCGQASDSVTLKKCLKSKPASEIVSAVQSFLVFSYVPFTPFGPAIESPDAPEAFITQHPIDIIKSGKFAQVPWAVTYTTEDGGYNAALLLEKQASSGRELILDLNDRWFDWAPYLLFYRDSMTTIKDMDDYSRKLRQEYLGDRRFSVESYWDVQRMFTDLLFKNSVTVSVDLHRKYGKSPVYAFVYDNPAEVGVGQILSGRNDVYFGTVHGDDVFLIFNVSFVPANRRPDEQIISRNFIKMLEYFALSTNDTMAYGDCVFQNNVGSKHMQLLSITRDGCENKQLNCFIQRCLIFF</sequence>
<reference key="1">
    <citation type="journal article" date="1998" name="Genetics">
        <title>The role of gene conversion in determining sequence variation and divergence in the Est-5 gene family in Drosophila pseudoobscura.</title>
        <authorList>
            <person name="King L.M."/>
        </authorList>
    </citation>
    <scope>NUCLEOTIDE SEQUENCE [GENOMIC DNA]</scope>
</reference>
<feature type="signal peptide" evidence="2">
    <location>
        <begin position="1"/>
        <end position="19"/>
    </location>
</feature>
<feature type="chain" id="PRO_0000008552" description="Esterase-5A">
    <location>
        <begin position="20"/>
        <end position="555"/>
    </location>
</feature>
<feature type="active site" description="Acyl-ester intermediate" evidence="3">
    <location>
        <position position="210"/>
    </location>
</feature>
<feature type="glycosylation site" description="N-linked (GlcNAc...) asparagine" evidence="2">
    <location>
        <position position="95"/>
    </location>
</feature>
<feature type="glycosylation site" description="N-linked (GlcNAc...) asparagine" evidence="2">
    <location>
        <position position="116"/>
    </location>
</feature>
<feature type="glycosylation site" description="N-linked (GlcNAc...) asparagine" evidence="2">
    <location>
        <position position="479"/>
    </location>
</feature>
<feature type="glycosylation site" description="N-linked (GlcNAc...) asparagine" evidence="2">
    <location>
        <position position="510"/>
    </location>
</feature>
<feature type="disulfide bond" evidence="1">
    <location>
        <begin position="87"/>
        <end position="106"/>
    </location>
</feature>
<feature type="disulfide bond" evidence="1">
    <location>
        <begin position="262"/>
        <end position="274"/>
    </location>
</feature>
<feature type="disulfide bond" evidence="2">
    <location>
        <begin position="518"/>
        <end position="539"/>
    </location>
</feature>
<dbReference type="EC" id="3.1.1.1"/>
<dbReference type="EMBL" id="AF016108">
    <property type="protein sequence ID" value="AAB70219.1"/>
    <property type="molecule type" value="Genomic_DNA"/>
</dbReference>
<dbReference type="SMR" id="O16168"/>
<dbReference type="ESTHER" id="dromi-est5a">
    <property type="family name" value="Carb_B_Arthropoda"/>
</dbReference>
<dbReference type="MEROPS" id="S09.947"/>
<dbReference type="GlyCosmos" id="O16168">
    <property type="glycosylation" value="4 sites, No reported glycans"/>
</dbReference>
<dbReference type="GO" id="GO:0005576">
    <property type="term" value="C:extracellular region"/>
    <property type="evidence" value="ECO:0007669"/>
    <property type="project" value="UniProtKB-SubCell"/>
</dbReference>
<dbReference type="GO" id="GO:0106435">
    <property type="term" value="F:carboxylesterase activity"/>
    <property type="evidence" value="ECO:0007669"/>
    <property type="project" value="UniProtKB-EC"/>
</dbReference>
<dbReference type="CDD" id="cd00312">
    <property type="entry name" value="Esterase_lipase"/>
    <property type="match status" value="1"/>
</dbReference>
<dbReference type="FunFam" id="3.40.50.1820:FF:000378">
    <property type="entry name" value="Carboxylic ester hydrolase"/>
    <property type="match status" value="1"/>
</dbReference>
<dbReference type="Gene3D" id="3.40.50.1820">
    <property type="entry name" value="alpha/beta hydrolase"/>
    <property type="match status" value="1"/>
</dbReference>
<dbReference type="InterPro" id="IPR029058">
    <property type="entry name" value="AB_hydrolase_fold"/>
</dbReference>
<dbReference type="InterPro" id="IPR002018">
    <property type="entry name" value="CarbesteraseB"/>
</dbReference>
<dbReference type="InterPro" id="IPR019826">
    <property type="entry name" value="Carboxylesterase_B_AS"/>
</dbReference>
<dbReference type="InterPro" id="IPR019819">
    <property type="entry name" value="Carboxylesterase_B_CS"/>
</dbReference>
<dbReference type="PANTHER" id="PTHR43142">
    <property type="entry name" value="CARBOXYLIC ESTER HYDROLASE"/>
    <property type="match status" value="1"/>
</dbReference>
<dbReference type="PANTHER" id="PTHR43142:SF1">
    <property type="entry name" value="CARBOXYLIC ESTER HYDROLASE"/>
    <property type="match status" value="1"/>
</dbReference>
<dbReference type="Pfam" id="PF00135">
    <property type="entry name" value="COesterase"/>
    <property type="match status" value="1"/>
</dbReference>
<dbReference type="SUPFAM" id="SSF53474">
    <property type="entry name" value="alpha/beta-Hydrolases"/>
    <property type="match status" value="1"/>
</dbReference>
<dbReference type="PROSITE" id="PS00122">
    <property type="entry name" value="CARBOXYLESTERASE_B_1"/>
    <property type="match status" value="1"/>
</dbReference>
<dbReference type="PROSITE" id="PS00941">
    <property type="entry name" value="CARBOXYLESTERASE_B_2"/>
    <property type="match status" value="1"/>
</dbReference>